<comment type="function">
    <text evidence="1">Necessary for the succinyl substitution of periplasmic glucans. Could catalyze the transfer of succinyl residues from the cytoplasmic side of the membrane to the nascent glucan backbones on the periplasmic side of the membrane.</text>
</comment>
<comment type="pathway">
    <text evidence="1">Glycan metabolism; osmoregulated periplasmic glucan (OPG) biosynthesis.</text>
</comment>
<comment type="subcellular location">
    <subcellularLocation>
        <location evidence="1">Cell membrane</location>
        <topology evidence="1">Multi-pass membrane protein</topology>
    </subcellularLocation>
</comment>
<comment type="similarity">
    <text evidence="1">Belongs to the acyltransferase 3 family. OpgC subfamily.</text>
</comment>
<organism>
    <name type="scientific">Escherichia coli O127:H6 (strain E2348/69 / EPEC)</name>
    <dbReference type="NCBI Taxonomy" id="574521"/>
    <lineage>
        <taxon>Bacteria</taxon>
        <taxon>Pseudomonadati</taxon>
        <taxon>Pseudomonadota</taxon>
        <taxon>Gammaproteobacteria</taxon>
        <taxon>Enterobacterales</taxon>
        <taxon>Enterobacteriaceae</taxon>
        <taxon>Escherichia</taxon>
    </lineage>
</organism>
<feature type="chain" id="PRO_1000149735" description="Glucans biosynthesis protein C">
    <location>
        <begin position="1"/>
        <end position="385"/>
    </location>
</feature>
<feature type="transmembrane region" description="Helical" evidence="1">
    <location>
        <begin position="17"/>
        <end position="37"/>
    </location>
</feature>
<feature type="transmembrane region" description="Helical" evidence="1">
    <location>
        <begin position="60"/>
        <end position="80"/>
    </location>
</feature>
<feature type="transmembrane region" description="Helical" evidence="1">
    <location>
        <begin position="91"/>
        <end position="111"/>
    </location>
</feature>
<feature type="transmembrane region" description="Helical" evidence="1">
    <location>
        <begin position="137"/>
        <end position="157"/>
    </location>
</feature>
<feature type="transmembrane region" description="Helical" evidence="1">
    <location>
        <begin position="173"/>
        <end position="193"/>
    </location>
</feature>
<feature type="transmembrane region" description="Helical" evidence="1">
    <location>
        <begin position="212"/>
        <end position="232"/>
    </location>
</feature>
<feature type="transmembrane region" description="Helical" evidence="1">
    <location>
        <begin position="239"/>
        <end position="259"/>
    </location>
</feature>
<feature type="transmembrane region" description="Helical" evidence="1">
    <location>
        <begin position="274"/>
        <end position="294"/>
    </location>
</feature>
<feature type="transmembrane region" description="Helical" evidence="1">
    <location>
        <begin position="311"/>
        <end position="331"/>
    </location>
</feature>
<feature type="transmembrane region" description="Helical" evidence="1">
    <location>
        <begin position="338"/>
        <end position="358"/>
    </location>
</feature>
<evidence type="ECO:0000255" key="1">
    <source>
        <dbReference type="HAMAP-Rule" id="MF_01066"/>
    </source>
</evidence>
<dbReference type="EC" id="2.1.-.-" evidence="1"/>
<dbReference type="EMBL" id="FM180568">
    <property type="protein sequence ID" value="CAS08686.1"/>
    <property type="molecule type" value="Genomic_DNA"/>
</dbReference>
<dbReference type="RefSeq" id="WP_001070350.1">
    <property type="nucleotide sequence ID" value="NC_011601.1"/>
</dbReference>
<dbReference type="GeneID" id="93776367"/>
<dbReference type="KEGG" id="ecg:E2348C_1138"/>
<dbReference type="HOGENOM" id="CLU_036182_2_0_6"/>
<dbReference type="UniPathway" id="UPA00637"/>
<dbReference type="Proteomes" id="UP000008205">
    <property type="component" value="Chromosome"/>
</dbReference>
<dbReference type="GO" id="GO:0005886">
    <property type="term" value="C:plasma membrane"/>
    <property type="evidence" value="ECO:0007669"/>
    <property type="project" value="UniProtKB-SubCell"/>
</dbReference>
<dbReference type="GO" id="GO:0016747">
    <property type="term" value="F:acyltransferase activity, transferring groups other than amino-acyl groups"/>
    <property type="evidence" value="ECO:0007669"/>
    <property type="project" value="InterPro"/>
</dbReference>
<dbReference type="GO" id="GO:0016741">
    <property type="term" value="F:transferase activity, transferring one-carbon groups"/>
    <property type="evidence" value="ECO:0007669"/>
    <property type="project" value="UniProtKB-UniRule"/>
</dbReference>
<dbReference type="GO" id="GO:0009250">
    <property type="term" value="P:glucan biosynthetic process"/>
    <property type="evidence" value="ECO:0007669"/>
    <property type="project" value="UniProtKB-UniRule"/>
</dbReference>
<dbReference type="HAMAP" id="MF_01066">
    <property type="entry name" value="MdoC_OpgC"/>
    <property type="match status" value="1"/>
</dbReference>
<dbReference type="InterPro" id="IPR002656">
    <property type="entry name" value="Acyl_transf_3_dom"/>
</dbReference>
<dbReference type="InterPro" id="IPR050623">
    <property type="entry name" value="Glucan_succinyl_AcylTrfase"/>
</dbReference>
<dbReference type="InterPro" id="IPR023723">
    <property type="entry name" value="Glucans_biosynth_C"/>
</dbReference>
<dbReference type="NCBIfam" id="NF003014">
    <property type="entry name" value="PRK03854.1"/>
    <property type="match status" value="1"/>
</dbReference>
<dbReference type="PANTHER" id="PTHR36927">
    <property type="entry name" value="BLR4337 PROTEIN"/>
    <property type="match status" value="1"/>
</dbReference>
<dbReference type="PANTHER" id="PTHR36927:SF3">
    <property type="entry name" value="GLUCANS BIOSYNTHESIS PROTEIN C"/>
    <property type="match status" value="1"/>
</dbReference>
<dbReference type="Pfam" id="PF01757">
    <property type="entry name" value="Acyl_transf_3"/>
    <property type="match status" value="1"/>
</dbReference>
<keyword id="KW-0012">Acyltransferase</keyword>
<keyword id="KW-1003">Cell membrane</keyword>
<keyword id="KW-0472">Membrane</keyword>
<keyword id="KW-1185">Reference proteome</keyword>
<keyword id="KW-0808">Transferase</keyword>
<keyword id="KW-0812">Transmembrane</keyword>
<keyword id="KW-1133">Transmembrane helix</keyword>
<accession>B7UP62</accession>
<name>OPGC_ECO27</name>
<protein>
    <recommendedName>
        <fullName evidence="1">Glucans biosynthesis protein C</fullName>
        <ecNumber evidence="1">2.1.-.-</ecNumber>
    </recommendedName>
</protein>
<gene>
    <name evidence="1" type="primary">mdoC</name>
    <name evidence="1" type="synonym">opgC</name>
    <name type="ordered locus">E2348C_1138</name>
</gene>
<reference key="1">
    <citation type="journal article" date="2009" name="J. Bacteriol.">
        <title>Complete genome sequence and comparative genome analysis of enteropathogenic Escherichia coli O127:H6 strain E2348/69.</title>
        <authorList>
            <person name="Iguchi A."/>
            <person name="Thomson N.R."/>
            <person name="Ogura Y."/>
            <person name="Saunders D."/>
            <person name="Ooka T."/>
            <person name="Henderson I.R."/>
            <person name="Harris D."/>
            <person name="Asadulghani M."/>
            <person name="Kurokawa K."/>
            <person name="Dean P."/>
            <person name="Kenny B."/>
            <person name="Quail M.A."/>
            <person name="Thurston S."/>
            <person name="Dougan G."/>
            <person name="Hayashi T."/>
            <person name="Parkhill J."/>
            <person name="Frankel G."/>
        </authorList>
    </citation>
    <scope>NUCLEOTIDE SEQUENCE [LARGE SCALE GENOMIC DNA]</scope>
    <source>
        <strain>E2348/69 / EPEC</strain>
    </source>
</reference>
<sequence>MNPVPAQREYFLDSIRAWLMLLGIPFHISLIYSSHTWHVNSAEPSLWLTLFNDFIHSFRMQVFFVISGYFSYMLFLRYPLKKWWKVRVERVGIPMLTAIPLLTLPQFIMLQYVKGKAESWPGLSLYDKYNTLAWELISHLWFLLVLVVMTTLCVWIFKRIRNNLENSDKTNKKFSMVKLSVIFLCLGIGYAVIRRTIFIVYPPILSNGMFNFIVMQTLFYLPFFILGALAFIFPHLKALFTTPSRGCTLAAALAFVAYLLNQRYGSGDAWMYETESVITMVLGLWMVNVVFSFGHRLLNFQSARVTYFVNASLFIYLVHHPLTLFFGAYITPHITSNWLGFLCGLIFVVGIAIILYEIHLRIPLLKFLFSGKPVVKRENDKAPAR</sequence>
<proteinExistence type="inferred from homology"/>